<name>MURA_AERHH</name>
<dbReference type="EC" id="2.5.1.7" evidence="1"/>
<dbReference type="EMBL" id="CP000462">
    <property type="protein sequence ID" value="ABK39218.1"/>
    <property type="molecule type" value="Genomic_DNA"/>
</dbReference>
<dbReference type="RefSeq" id="WP_011707623.1">
    <property type="nucleotide sequence ID" value="NC_008570.1"/>
</dbReference>
<dbReference type="RefSeq" id="YP_858374.1">
    <property type="nucleotide sequence ID" value="NC_008570.1"/>
</dbReference>
<dbReference type="SMR" id="A0KQ23"/>
<dbReference type="STRING" id="380703.AHA_3935"/>
<dbReference type="EnsemblBacteria" id="ABK39218">
    <property type="protein sequence ID" value="ABK39218"/>
    <property type="gene ID" value="AHA_3935"/>
</dbReference>
<dbReference type="GeneID" id="4486755"/>
<dbReference type="KEGG" id="aha:AHA_3935"/>
<dbReference type="PATRIC" id="fig|380703.7.peg.3905"/>
<dbReference type="eggNOG" id="COG0766">
    <property type="taxonomic scope" value="Bacteria"/>
</dbReference>
<dbReference type="HOGENOM" id="CLU_027387_0_0_6"/>
<dbReference type="OrthoDB" id="9803760at2"/>
<dbReference type="UniPathway" id="UPA00219"/>
<dbReference type="Proteomes" id="UP000000756">
    <property type="component" value="Chromosome"/>
</dbReference>
<dbReference type="GO" id="GO:0005737">
    <property type="term" value="C:cytoplasm"/>
    <property type="evidence" value="ECO:0007669"/>
    <property type="project" value="UniProtKB-SubCell"/>
</dbReference>
<dbReference type="GO" id="GO:0008760">
    <property type="term" value="F:UDP-N-acetylglucosamine 1-carboxyvinyltransferase activity"/>
    <property type="evidence" value="ECO:0007669"/>
    <property type="project" value="UniProtKB-UniRule"/>
</dbReference>
<dbReference type="GO" id="GO:0051301">
    <property type="term" value="P:cell division"/>
    <property type="evidence" value="ECO:0007669"/>
    <property type="project" value="UniProtKB-KW"/>
</dbReference>
<dbReference type="GO" id="GO:0071555">
    <property type="term" value="P:cell wall organization"/>
    <property type="evidence" value="ECO:0007669"/>
    <property type="project" value="UniProtKB-KW"/>
</dbReference>
<dbReference type="GO" id="GO:0009252">
    <property type="term" value="P:peptidoglycan biosynthetic process"/>
    <property type="evidence" value="ECO:0007669"/>
    <property type="project" value="UniProtKB-UniRule"/>
</dbReference>
<dbReference type="GO" id="GO:0008360">
    <property type="term" value="P:regulation of cell shape"/>
    <property type="evidence" value="ECO:0007669"/>
    <property type="project" value="UniProtKB-KW"/>
</dbReference>
<dbReference type="GO" id="GO:0019277">
    <property type="term" value="P:UDP-N-acetylgalactosamine biosynthetic process"/>
    <property type="evidence" value="ECO:0007669"/>
    <property type="project" value="InterPro"/>
</dbReference>
<dbReference type="CDD" id="cd01555">
    <property type="entry name" value="UdpNAET"/>
    <property type="match status" value="1"/>
</dbReference>
<dbReference type="FunFam" id="3.65.10.10:FF:000002">
    <property type="entry name" value="UDP-N-acetylglucosamine 1-carboxyvinyltransferase"/>
    <property type="match status" value="1"/>
</dbReference>
<dbReference type="Gene3D" id="3.65.10.10">
    <property type="entry name" value="Enolpyruvate transferase domain"/>
    <property type="match status" value="2"/>
</dbReference>
<dbReference type="HAMAP" id="MF_00111">
    <property type="entry name" value="MurA"/>
    <property type="match status" value="1"/>
</dbReference>
<dbReference type="InterPro" id="IPR001986">
    <property type="entry name" value="Enolpyruvate_Tfrase_dom"/>
</dbReference>
<dbReference type="InterPro" id="IPR036968">
    <property type="entry name" value="Enolpyruvate_Tfrase_sf"/>
</dbReference>
<dbReference type="InterPro" id="IPR050068">
    <property type="entry name" value="MurA_subfamily"/>
</dbReference>
<dbReference type="InterPro" id="IPR013792">
    <property type="entry name" value="RNA3'P_cycl/enolpyr_Trfase_a/b"/>
</dbReference>
<dbReference type="InterPro" id="IPR005750">
    <property type="entry name" value="UDP_GlcNAc_COvinyl_MurA"/>
</dbReference>
<dbReference type="NCBIfam" id="TIGR01072">
    <property type="entry name" value="murA"/>
    <property type="match status" value="1"/>
</dbReference>
<dbReference type="NCBIfam" id="NF006873">
    <property type="entry name" value="PRK09369.1"/>
    <property type="match status" value="1"/>
</dbReference>
<dbReference type="PANTHER" id="PTHR43783">
    <property type="entry name" value="UDP-N-ACETYLGLUCOSAMINE 1-CARBOXYVINYLTRANSFERASE"/>
    <property type="match status" value="1"/>
</dbReference>
<dbReference type="PANTHER" id="PTHR43783:SF1">
    <property type="entry name" value="UDP-N-ACETYLGLUCOSAMINE 1-CARBOXYVINYLTRANSFERASE"/>
    <property type="match status" value="1"/>
</dbReference>
<dbReference type="Pfam" id="PF00275">
    <property type="entry name" value="EPSP_synthase"/>
    <property type="match status" value="1"/>
</dbReference>
<dbReference type="SUPFAM" id="SSF55205">
    <property type="entry name" value="EPT/RTPC-like"/>
    <property type="match status" value="1"/>
</dbReference>
<gene>
    <name evidence="1" type="primary">murA</name>
    <name type="ordered locus">AHA_3935</name>
</gene>
<reference key="1">
    <citation type="journal article" date="2006" name="J. Bacteriol.">
        <title>Genome sequence of Aeromonas hydrophila ATCC 7966T: jack of all trades.</title>
        <authorList>
            <person name="Seshadri R."/>
            <person name="Joseph S.W."/>
            <person name="Chopra A.K."/>
            <person name="Sha J."/>
            <person name="Shaw J."/>
            <person name="Graf J."/>
            <person name="Haft D.H."/>
            <person name="Wu M."/>
            <person name="Ren Q."/>
            <person name="Rosovitz M.J."/>
            <person name="Madupu R."/>
            <person name="Tallon L."/>
            <person name="Kim M."/>
            <person name="Jin S."/>
            <person name="Vuong H."/>
            <person name="Stine O.C."/>
            <person name="Ali A."/>
            <person name="Horneman A.J."/>
            <person name="Heidelberg J.F."/>
        </authorList>
    </citation>
    <scope>NUCLEOTIDE SEQUENCE [LARGE SCALE GENOMIC DNA]</scope>
    <source>
        <strain>ATCC 7966 / DSM 30187 / BCRC 13018 / CCUG 14551 / JCM 1027 / KCTC 2358 / NCIMB 9240 / NCTC 8049</strain>
    </source>
</reference>
<keyword id="KW-0131">Cell cycle</keyword>
<keyword id="KW-0132">Cell division</keyword>
<keyword id="KW-0133">Cell shape</keyword>
<keyword id="KW-0961">Cell wall biogenesis/degradation</keyword>
<keyword id="KW-0963">Cytoplasm</keyword>
<keyword id="KW-0573">Peptidoglycan synthesis</keyword>
<keyword id="KW-0670">Pyruvate</keyword>
<keyword id="KW-1185">Reference proteome</keyword>
<keyword id="KW-0808">Transferase</keyword>
<proteinExistence type="inferred from homology"/>
<organism>
    <name type="scientific">Aeromonas hydrophila subsp. hydrophila (strain ATCC 7966 / DSM 30187 / BCRC 13018 / CCUG 14551 / JCM 1027 / KCTC 2358 / NCIMB 9240 / NCTC 8049)</name>
    <dbReference type="NCBI Taxonomy" id="380703"/>
    <lineage>
        <taxon>Bacteria</taxon>
        <taxon>Pseudomonadati</taxon>
        <taxon>Pseudomonadota</taxon>
        <taxon>Gammaproteobacteria</taxon>
        <taxon>Aeromonadales</taxon>
        <taxon>Aeromonadaceae</taxon>
        <taxon>Aeromonas</taxon>
    </lineage>
</organism>
<sequence length="418" mass="44462">MDKFKIDGRCTLNGEVTISGAKNAALPILFATLLCDEEIHLSNVPRLKDVGTTIKLLEMLGATTKVNGNVTVLTGAVNNHVAPYELVKTMRASILALGPLAARFGAADVSLPGGCAIGARPVNLHVHGLELMGAKIAIEDGYIKARVDGRLKGAHILMDMVSVTGTENLMMAATLADGRTVIENAAREPEVVDLANFLNALGAKIQGAGTDTLTIDGVERLHGGSYSVQPDRIETGTFLVGAAVTGGKITCRKTDPTLLEAVLVKLEEAGALIEKGEDWITLDMTGRTLKPVTIKTAPYPAFPTDMQAQFTVLNAVAKGTGMVTETIFENRFMHVPELVRMGADIELQGNVAICRDTQQLKGAQVMATDLRASASLVLAGFVAEGSTIVDRIYHIDRGYEDIEHKLQGLGGRIERIKG</sequence>
<comment type="function">
    <text evidence="1">Cell wall formation. Adds enolpyruvyl to UDP-N-acetylglucosamine.</text>
</comment>
<comment type="catalytic activity">
    <reaction evidence="1">
        <text>phosphoenolpyruvate + UDP-N-acetyl-alpha-D-glucosamine = UDP-N-acetyl-3-O-(1-carboxyvinyl)-alpha-D-glucosamine + phosphate</text>
        <dbReference type="Rhea" id="RHEA:18681"/>
        <dbReference type="ChEBI" id="CHEBI:43474"/>
        <dbReference type="ChEBI" id="CHEBI:57705"/>
        <dbReference type="ChEBI" id="CHEBI:58702"/>
        <dbReference type="ChEBI" id="CHEBI:68483"/>
        <dbReference type="EC" id="2.5.1.7"/>
    </reaction>
</comment>
<comment type="pathway">
    <text evidence="1">Cell wall biogenesis; peptidoglycan biosynthesis.</text>
</comment>
<comment type="subcellular location">
    <subcellularLocation>
        <location evidence="1">Cytoplasm</location>
    </subcellularLocation>
</comment>
<comment type="similarity">
    <text evidence="1">Belongs to the EPSP synthase family. MurA subfamily.</text>
</comment>
<evidence type="ECO:0000255" key="1">
    <source>
        <dbReference type="HAMAP-Rule" id="MF_00111"/>
    </source>
</evidence>
<protein>
    <recommendedName>
        <fullName evidence="1">UDP-N-acetylglucosamine 1-carboxyvinyltransferase</fullName>
        <ecNumber evidence="1">2.5.1.7</ecNumber>
    </recommendedName>
    <alternativeName>
        <fullName evidence="1">Enoylpyruvate transferase</fullName>
    </alternativeName>
    <alternativeName>
        <fullName evidence="1">UDP-N-acetylglucosamine enolpyruvyl transferase</fullName>
        <shortName evidence="1">EPT</shortName>
    </alternativeName>
</protein>
<accession>A0KQ23</accession>
<feature type="chain" id="PRO_1000023014" description="UDP-N-acetylglucosamine 1-carboxyvinyltransferase">
    <location>
        <begin position="1"/>
        <end position="418"/>
    </location>
</feature>
<feature type="active site" description="Proton donor" evidence="1">
    <location>
        <position position="115"/>
    </location>
</feature>
<feature type="binding site" evidence="1">
    <location>
        <begin position="22"/>
        <end position="23"/>
    </location>
    <ligand>
        <name>phosphoenolpyruvate</name>
        <dbReference type="ChEBI" id="CHEBI:58702"/>
    </ligand>
</feature>
<feature type="binding site" evidence="1">
    <location>
        <position position="91"/>
    </location>
    <ligand>
        <name>UDP-N-acetyl-alpha-D-glucosamine</name>
        <dbReference type="ChEBI" id="CHEBI:57705"/>
    </ligand>
</feature>
<feature type="binding site" evidence="1">
    <location>
        <position position="305"/>
    </location>
    <ligand>
        <name>UDP-N-acetyl-alpha-D-glucosamine</name>
        <dbReference type="ChEBI" id="CHEBI:57705"/>
    </ligand>
</feature>
<feature type="binding site" evidence="1">
    <location>
        <position position="327"/>
    </location>
    <ligand>
        <name>UDP-N-acetyl-alpha-D-glucosamine</name>
        <dbReference type="ChEBI" id="CHEBI:57705"/>
    </ligand>
</feature>
<feature type="modified residue" description="2-(S-cysteinyl)pyruvic acid O-phosphothioketal" evidence="1">
    <location>
        <position position="115"/>
    </location>
</feature>